<keyword id="KW-0012">Acyltransferase</keyword>
<keyword id="KW-0963">Cytoplasm</keyword>
<keyword id="KW-0275">Fatty acid biosynthesis</keyword>
<keyword id="KW-0276">Fatty acid metabolism</keyword>
<keyword id="KW-0444">Lipid biosynthesis</keyword>
<keyword id="KW-0443">Lipid metabolism</keyword>
<keyword id="KW-0511">Multifunctional enzyme</keyword>
<keyword id="KW-0808">Transferase</keyword>
<protein>
    <recommendedName>
        <fullName evidence="1">Beta-ketoacyl-[acyl-carrier-protein] synthase III</fullName>
        <shortName evidence="1">Beta-ketoacyl-ACP synthase III</shortName>
        <shortName evidence="1">KAS III</shortName>
        <ecNumber evidence="1">2.3.1.180</ecNumber>
    </recommendedName>
    <alternativeName>
        <fullName evidence="1">3-oxoacyl-[acyl-carrier-protein] synthase 3</fullName>
    </alternativeName>
    <alternativeName>
        <fullName evidence="1">3-oxoacyl-[acyl-carrier-protein] synthase III</fullName>
    </alternativeName>
</protein>
<proteinExistence type="inferred from homology"/>
<dbReference type="EC" id="2.3.1.180" evidence="1"/>
<dbReference type="EMBL" id="CP001072">
    <property type="protein sequence ID" value="ACD47664.1"/>
    <property type="molecule type" value="Genomic_DNA"/>
</dbReference>
<dbReference type="RefSeq" id="WP_000397777.1">
    <property type="nucleotide sequence ID" value="NC_010698.2"/>
</dbReference>
<dbReference type="SMR" id="B2US32"/>
<dbReference type="KEGG" id="hps:HPSH_01035"/>
<dbReference type="HOGENOM" id="CLU_039592_4_1_7"/>
<dbReference type="UniPathway" id="UPA00094"/>
<dbReference type="GO" id="GO:0005737">
    <property type="term" value="C:cytoplasm"/>
    <property type="evidence" value="ECO:0007669"/>
    <property type="project" value="UniProtKB-SubCell"/>
</dbReference>
<dbReference type="GO" id="GO:0004315">
    <property type="term" value="F:3-oxoacyl-[acyl-carrier-protein] synthase activity"/>
    <property type="evidence" value="ECO:0007669"/>
    <property type="project" value="InterPro"/>
</dbReference>
<dbReference type="GO" id="GO:0033818">
    <property type="term" value="F:beta-ketoacyl-acyl-carrier-protein synthase III activity"/>
    <property type="evidence" value="ECO:0007669"/>
    <property type="project" value="UniProtKB-UniRule"/>
</dbReference>
<dbReference type="GO" id="GO:0006633">
    <property type="term" value="P:fatty acid biosynthetic process"/>
    <property type="evidence" value="ECO:0007669"/>
    <property type="project" value="UniProtKB-UniRule"/>
</dbReference>
<dbReference type="GO" id="GO:0044550">
    <property type="term" value="P:secondary metabolite biosynthetic process"/>
    <property type="evidence" value="ECO:0007669"/>
    <property type="project" value="TreeGrafter"/>
</dbReference>
<dbReference type="CDD" id="cd00830">
    <property type="entry name" value="KAS_III"/>
    <property type="match status" value="1"/>
</dbReference>
<dbReference type="FunFam" id="3.40.47.10:FF:000004">
    <property type="entry name" value="3-oxoacyl-[acyl-carrier-protein] synthase 3"/>
    <property type="match status" value="1"/>
</dbReference>
<dbReference type="Gene3D" id="3.40.47.10">
    <property type="match status" value="1"/>
</dbReference>
<dbReference type="HAMAP" id="MF_01815">
    <property type="entry name" value="FabH"/>
    <property type="match status" value="1"/>
</dbReference>
<dbReference type="InterPro" id="IPR013747">
    <property type="entry name" value="ACP_syn_III_C"/>
</dbReference>
<dbReference type="InterPro" id="IPR013751">
    <property type="entry name" value="ACP_syn_III_N"/>
</dbReference>
<dbReference type="InterPro" id="IPR004655">
    <property type="entry name" value="FabH"/>
</dbReference>
<dbReference type="InterPro" id="IPR016039">
    <property type="entry name" value="Thiolase-like"/>
</dbReference>
<dbReference type="NCBIfam" id="TIGR00747">
    <property type="entry name" value="fabH"/>
    <property type="match status" value="1"/>
</dbReference>
<dbReference type="NCBIfam" id="NF006829">
    <property type="entry name" value="PRK09352.1"/>
    <property type="match status" value="1"/>
</dbReference>
<dbReference type="PANTHER" id="PTHR34069">
    <property type="entry name" value="3-OXOACYL-[ACYL-CARRIER-PROTEIN] SYNTHASE 3"/>
    <property type="match status" value="1"/>
</dbReference>
<dbReference type="PANTHER" id="PTHR34069:SF2">
    <property type="entry name" value="BETA-KETOACYL-[ACYL-CARRIER-PROTEIN] SYNTHASE III"/>
    <property type="match status" value="1"/>
</dbReference>
<dbReference type="Pfam" id="PF08545">
    <property type="entry name" value="ACP_syn_III"/>
    <property type="match status" value="1"/>
</dbReference>
<dbReference type="Pfam" id="PF08541">
    <property type="entry name" value="ACP_syn_III_C"/>
    <property type="match status" value="1"/>
</dbReference>
<dbReference type="SUPFAM" id="SSF53901">
    <property type="entry name" value="Thiolase-like"/>
    <property type="match status" value="1"/>
</dbReference>
<comment type="function">
    <text evidence="1">Catalyzes the condensation reaction of fatty acid synthesis by the addition to an acyl acceptor of two carbons from malonyl-ACP. Catalyzes the first condensation reaction which initiates fatty acid synthesis and may therefore play a role in governing the total rate of fatty acid production. Possesses both acetoacetyl-ACP synthase and acetyl transacylase activities. Its substrate specificity determines the biosynthesis of branched-chain and/or straight-chain of fatty acids.</text>
</comment>
<comment type="catalytic activity">
    <reaction evidence="1">
        <text>malonyl-[ACP] + acetyl-CoA + H(+) = 3-oxobutanoyl-[ACP] + CO2 + CoA</text>
        <dbReference type="Rhea" id="RHEA:12080"/>
        <dbReference type="Rhea" id="RHEA-COMP:9623"/>
        <dbReference type="Rhea" id="RHEA-COMP:9625"/>
        <dbReference type="ChEBI" id="CHEBI:15378"/>
        <dbReference type="ChEBI" id="CHEBI:16526"/>
        <dbReference type="ChEBI" id="CHEBI:57287"/>
        <dbReference type="ChEBI" id="CHEBI:57288"/>
        <dbReference type="ChEBI" id="CHEBI:78449"/>
        <dbReference type="ChEBI" id="CHEBI:78450"/>
        <dbReference type="EC" id="2.3.1.180"/>
    </reaction>
</comment>
<comment type="pathway">
    <text evidence="1">Lipid metabolism; fatty acid biosynthesis.</text>
</comment>
<comment type="subunit">
    <text evidence="1">Homodimer.</text>
</comment>
<comment type="subcellular location">
    <subcellularLocation>
        <location evidence="1">Cytoplasm</location>
    </subcellularLocation>
</comment>
<comment type="domain">
    <text evidence="1">The last Arg residue of the ACP-binding site is essential for the weak association between ACP/AcpP and FabH.</text>
</comment>
<comment type="similarity">
    <text evidence="1">Belongs to the thiolase-like superfamily. FabH family.</text>
</comment>
<organism>
    <name type="scientific">Helicobacter pylori (strain Shi470)</name>
    <dbReference type="NCBI Taxonomy" id="512562"/>
    <lineage>
        <taxon>Bacteria</taxon>
        <taxon>Pseudomonadati</taxon>
        <taxon>Campylobacterota</taxon>
        <taxon>Epsilonproteobacteria</taxon>
        <taxon>Campylobacterales</taxon>
        <taxon>Helicobacteraceae</taxon>
        <taxon>Helicobacter</taxon>
    </lineage>
</organism>
<sequence length="331" mass="36494">MEFYASLKSIAMHVPSERVKNAEFQQFLDTSDEWIEKRTGIKERRFANDEEKSSDLGVIAAKQAIERAHLTPKDIDLVVVATLSPDFLAMPSTACVLSAKLGIENKPAFDISAACTGFIYLLSVAKAYVESGMCENVLIVGAEKTSSVLDFKDRGTCILFGDGAGACVIGRTKRLKESVLDVQISANGNFSNYLYTPRTLKPTPFNAKEEASEPFLRMKGNEVFKLAVKTLLKDVEMILEKNALKPEDVRLFIPHQANFRIIQAVREHLDFKDEQVVLTVHKYGNTSAASIPMAMCEAYEEGRLKKGDLMLLDAFGGGLTWGSALVYFGGS</sequence>
<feature type="chain" id="PRO_1000187870" description="Beta-ketoacyl-[acyl-carrier-protein] synthase III">
    <location>
        <begin position="1"/>
        <end position="331"/>
    </location>
</feature>
<feature type="region of interest" description="ACP-binding" evidence="1">
    <location>
        <begin position="256"/>
        <end position="260"/>
    </location>
</feature>
<feature type="active site" evidence="1">
    <location>
        <position position="115"/>
    </location>
</feature>
<feature type="active site" evidence="1">
    <location>
        <position position="255"/>
    </location>
</feature>
<feature type="active site" evidence="1">
    <location>
        <position position="285"/>
    </location>
</feature>
<evidence type="ECO:0000255" key="1">
    <source>
        <dbReference type="HAMAP-Rule" id="MF_01815"/>
    </source>
</evidence>
<gene>
    <name evidence="1" type="primary">fabH</name>
    <name type="ordered locus">HPSH_01035</name>
</gene>
<accession>B2US32</accession>
<name>FABH_HELPS</name>
<reference key="1">
    <citation type="submission" date="2008-05" db="EMBL/GenBank/DDBJ databases">
        <title>Genome sequence of Helicobacter pylori from the remote Amazon: traces of Asian ancestry of the first Americans.</title>
        <authorList>
            <person name="Kersulyte D."/>
            <person name="Kalia A."/>
            <person name="Gilman R.H."/>
            <person name="Berg D.E."/>
        </authorList>
    </citation>
    <scope>NUCLEOTIDE SEQUENCE [LARGE SCALE GENOMIC DNA]</scope>
    <source>
        <strain>Shi470</strain>
    </source>
</reference>